<name>RER1C_ARATH</name>
<protein>
    <recommendedName>
        <fullName>Protein RER1C</fullName>
        <shortName>AtRER1C</shortName>
    </recommendedName>
</protein>
<feature type="chain" id="PRO_0000207596" description="Protein RER1C">
    <location>
        <begin position="1"/>
        <end position="212"/>
    </location>
</feature>
<feature type="transmembrane region" description="Helical" evidence="3">
    <location>
        <begin position="55"/>
        <end position="75"/>
    </location>
</feature>
<feature type="transmembrane region" description="Helical" evidence="3">
    <location>
        <begin position="82"/>
        <end position="102"/>
    </location>
</feature>
<feature type="transmembrane region" description="Helical" evidence="3">
    <location>
        <begin position="135"/>
        <end position="155"/>
    </location>
</feature>
<feature type="transmembrane region" description="Helical" evidence="3">
    <location>
        <begin position="157"/>
        <end position="177"/>
    </location>
</feature>
<feature type="modified residue" description="N-acetylmethionine" evidence="2">
    <location>
        <position position="1"/>
    </location>
</feature>
<comment type="function">
    <text evidence="1">Involved in the retrieval of endoplasmic reticulum membrane proteins from the early Golgi compartment.</text>
</comment>
<comment type="subcellular location">
    <subcellularLocation>
        <location evidence="4">Membrane</location>
        <topology evidence="4">Multi-pass membrane protein</topology>
    </subcellularLocation>
</comment>
<comment type="alternative products">
    <event type="alternative splicing"/>
    <isoform>
        <id>Q9ZWI7-1</id>
        <name>1</name>
        <sequence type="displayed"/>
    </isoform>
    <text>A number of isoforms are produced. According to EST sequences.</text>
</comment>
<comment type="similarity">
    <text evidence="4">Belongs to the RER1 family.</text>
</comment>
<keyword id="KW-0007">Acetylation</keyword>
<keyword id="KW-0025">Alternative splicing</keyword>
<keyword id="KW-0472">Membrane</keyword>
<keyword id="KW-1185">Reference proteome</keyword>
<keyword id="KW-0812">Transmembrane</keyword>
<keyword id="KW-1133">Transmembrane helix</keyword>
<gene>
    <name type="primary">RER1C</name>
    <name type="ordered locus">At2g23310</name>
    <name type="ORF">T20D16.6</name>
</gene>
<evidence type="ECO:0000250" key="1"/>
<evidence type="ECO:0000250" key="2">
    <source>
        <dbReference type="UniProtKB" id="O48670"/>
    </source>
</evidence>
<evidence type="ECO:0000255" key="3"/>
<evidence type="ECO:0000305" key="4"/>
<accession>Q9ZWI7</accession>
<accession>O22177</accession>
<sequence length="212" mass="24404">MESAATAVVPPAAAATTATATDDNLQSSDSSSPADAVNRLIHAFSQRQQHLLDKTVPHVLYRWIACLCVVLIYIVRVYFVEGFYIITYAIGIYLLNLIIAFLSPQEDPEASLTSGGSLPTRRSDEYRPFVRRLPEFKFWLSIIRAFIIGFMMTFFEVFDVPVFWPILLFYWVMLFFLTMRKQIQHMIKYRYVPFSFGKKQYGKKPAPTESSE</sequence>
<reference key="1">
    <citation type="journal article" date="1999" name="Plant Mol. Biol.">
        <title>The Arabidopsis thaliana RER1 gene family: its potential role in the endoplasmic reticulum localization of membrane proteins.</title>
        <authorList>
            <person name="Sato K."/>
            <person name="Ueda T."/>
            <person name="Nakano A."/>
        </authorList>
    </citation>
    <scope>NUCLEOTIDE SEQUENCE [MRNA]</scope>
    <source>
        <strain>cv. Columbia</strain>
    </source>
</reference>
<reference key="2">
    <citation type="journal article" date="1999" name="Nature">
        <title>Sequence and analysis of chromosome 2 of the plant Arabidopsis thaliana.</title>
        <authorList>
            <person name="Lin X."/>
            <person name="Kaul S."/>
            <person name="Rounsley S.D."/>
            <person name="Shea T.P."/>
            <person name="Benito M.-I."/>
            <person name="Town C.D."/>
            <person name="Fujii C.Y."/>
            <person name="Mason T.M."/>
            <person name="Bowman C.L."/>
            <person name="Barnstead M.E."/>
            <person name="Feldblyum T.V."/>
            <person name="Buell C.R."/>
            <person name="Ketchum K.A."/>
            <person name="Lee J.J."/>
            <person name="Ronning C.M."/>
            <person name="Koo H.L."/>
            <person name="Moffat K.S."/>
            <person name="Cronin L.A."/>
            <person name="Shen M."/>
            <person name="Pai G."/>
            <person name="Van Aken S."/>
            <person name="Umayam L."/>
            <person name="Tallon L.J."/>
            <person name="Gill J.E."/>
            <person name="Adams M.D."/>
            <person name="Carrera A.J."/>
            <person name="Creasy T.H."/>
            <person name="Goodman H.M."/>
            <person name="Somerville C.R."/>
            <person name="Copenhaver G.P."/>
            <person name="Preuss D."/>
            <person name="Nierman W.C."/>
            <person name="White O."/>
            <person name="Eisen J.A."/>
            <person name="Salzberg S.L."/>
            <person name="Fraser C.M."/>
            <person name="Venter J.C."/>
        </authorList>
    </citation>
    <scope>NUCLEOTIDE SEQUENCE [LARGE SCALE GENOMIC DNA]</scope>
    <source>
        <strain>cv. Columbia</strain>
    </source>
</reference>
<reference key="3">
    <citation type="journal article" date="2017" name="Plant J.">
        <title>Araport11: a complete reannotation of the Arabidopsis thaliana reference genome.</title>
        <authorList>
            <person name="Cheng C.Y."/>
            <person name="Krishnakumar V."/>
            <person name="Chan A.P."/>
            <person name="Thibaud-Nissen F."/>
            <person name="Schobel S."/>
            <person name="Town C.D."/>
        </authorList>
    </citation>
    <scope>GENOME REANNOTATION</scope>
    <source>
        <strain>cv. Columbia</strain>
    </source>
</reference>
<reference key="4">
    <citation type="journal article" date="2003" name="Science">
        <title>Empirical analysis of transcriptional activity in the Arabidopsis genome.</title>
        <authorList>
            <person name="Yamada K."/>
            <person name="Lim J."/>
            <person name="Dale J.M."/>
            <person name="Chen H."/>
            <person name="Shinn P."/>
            <person name="Palm C.J."/>
            <person name="Southwick A.M."/>
            <person name="Wu H.C."/>
            <person name="Kim C.J."/>
            <person name="Nguyen M."/>
            <person name="Pham P.K."/>
            <person name="Cheuk R.F."/>
            <person name="Karlin-Newmann G."/>
            <person name="Liu S.X."/>
            <person name="Lam B."/>
            <person name="Sakano H."/>
            <person name="Wu T."/>
            <person name="Yu G."/>
            <person name="Miranda M."/>
            <person name="Quach H.L."/>
            <person name="Tripp M."/>
            <person name="Chang C.H."/>
            <person name="Lee J.M."/>
            <person name="Toriumi M.J."/>
            <person name="Chan M.M."/>
            <person name="Tang C.C."/>
            <person name="Onodera C.S."/>
            <person name="Deng J.M."/>
            <person name="Akiyama K."/>
            <person name="Ansari Y."/>
            <person name="Arakawa T."/>
            <person name="Banh J."/>
            <person name="Banno F."/>
            <person name="Bowser L."/>
            <person name="Brooks S.Y."/>
            <person name="Carninci P."/>
            <person name="Chao Q."/>
            <person name="Choy N."/>
            <person name="Enju A."/>
            <person name="Goldsmith A.D."/>
            <person name="Gurjal M."/>
            <person name="Hansen N.F."/>
            <person name="Hayashizaki Y."/>
            <person name="Johnson-Hopson C."/>
            <person name="Hsuan V.W."/>
            <person name="Iida K."/>
            <person name="Karnes M."/>
            <person name="Khan S."/>
            <person name="Koesema E."/>
            <person name="Ishida J."/>
            <person name="Jiang P.X."/>
            <person name="Jones T."/>
            <person name="Kawai J."/>
            <person name="Kamiya A."/>
            <person name="Meyers C."/>
            <person name="Nakajima M."/>
            <person name="Narusaka M."/>
            <person name="Seki M."/>
            <person name="Sakurai T."/>
            <person name="Satou M."/>
            <person name="Tamse R."/>
            <person name="Vaysberg M."/>
            <person name="Wallender E.K."/>
            <person name="Wong C."/>
            <person name="Yamamura Y."/>
            <person name="Yuan S."/>
            <person name="Shinozaki K."/>
            <person name="Davis R.W."/>
            <person name="Theologis A."/>
            <person name="Ecker J.R."/>
        </authorList>
    </citation>
    <scope>NUCLEOTIDE SEQUENCE [LARGE SCALE MRNA]</scope>
    <source>
        <strain>cv. Columbia</strain>
    </source>
</reference>
<reference key="5">
    <citation type="submission" date="2002-03" db="EMBL/GenBank/DDBJ databases">
        <title>Full-length cDNA from Arabidopsis thaliana.</title>
        <authorList>
            <person name="Brover V.V."/>
            <person name="Troukhan M.E."/>
            <person name="Alexandrov N.A."/>
            <person name="Lu Y.-P."/>
            <person name="Flavell R.B."/>
            <person name="Feldmann K.A."/>
        </authorList>
    </citation>
    <scope>NUCLEOTIDE SEQUENCE [LARGE SCALE MRNA]</scope>
</reference>
<proteinExistence type="evidence at transcript level"/>
<dbReference type="EMBL" id="AB018552">
    <property type="protein sequence ID" value="BAA33862.1"/>
    <property type="molecule type" value="mRNA"/>
</dbReference>
<dbReference type="EMBL" id="AC002391">
    <property type="protein sequence ID" value="AAB87102.2"/>
    <property type="molecule type" value="Genomic_DNA"/>
</dbReference>
<dbReference type="EMBL" id="CP002685">
    <property type="protein sequence ID" value="AEC07439.1"/>
    <property type="molecule type" value="Genomic_DNA"/>
</dbReference>
<dbReference type="EMBL" id="AY069898">
    <property type="protein sequence ID" value="AAL47450.1"/>
    <property type="molecule type" value="mRNA"/>
</dbReference>
<dbReference type="EMBL" id="AY097390">
    <property type="protein sequence ID" value="AAM19906.1"/>
    <property type="molecule type" value="mRNA"/>
</dbReference>
<dbReference type="EMBL" id="AY086455">
    <property type="protein sequence ID" value="AAM63458.1"/>
    <property type="molecule type" value="mRNA"/>
</dbReference>
<dbReference type="PIR" id="T00501">
    <property type="entry name" value="T00501"/>
</dbReference>
<dbReference type="PIR" id="T51629">
    <property type="entry name" value="T51629"/>
</dbReference>
<dbReference type="RefSeq" id="NP_565550.1">
    <molecule id="Q9ZWI7-1"/>
    <property type="nucleotide sequence ID" value="NM_127895.4"/>
</dbReference>
<dbReference type="BioGRID" id="2215">
    <property type="interactions" value="2"/>
</dbReference>
<dbReference type="FunCoup" id="Q9ZWI7">
    <property type="interactions" value="4196"/>
</dbReference>
<dbReference type="IntAct" id="Q9ZWI7">
    <property type="interactions" value="4"/>
</dbReference>
<dbReference type="STRING" id="3702.Q9ZWI7"/>
<dbReference type="iPTMnet" id="Q9ZWI7"/>
<dbReference type="PaxDb" id="3702-AT2G23310.1"/>
<dbReference type="EnsemblPlants" id="AT2G23310.1">
    <molecule id="Q9ZWI7-1"/>
    <property type="protein sequence ID" value="AT2G23310.1"/>
    <property type="gene ID" value="AT2G23310"/>
</dbReference>
<dbReference type="GeneID" id="816863"/>
<dbReference type="Gramene" id="AT2G23310.1">
    <molecule id="Q9ZWI7-1"/>
    <property type="protein sequence ID" value="AT2G23310.1"/>
    <property type="gene ID" value="AT2G23310"/>
</dbReference>
<dbReference type="KEGG" id="ath:AT2G23310"/>
<dbReference type="Araport" id="AT2G23310"/>
<dbReference type="TAIR" id="AT2G23310">
    <property type="gene designation" value="ATRER1C1"/>
</dbReference>
<dbReference type="eggNOG" id="KOG1688">
    <property type="taxonomic scope" value="Eukaryota"/>
</dbReference>
<dbReference type="InParanoid" id="Q9ZWI7"/>
<dbReference type="OMA" id="WVMLFIL"/>
<dbReference type="PhylomeDB" id="Q9ZWI7"/>
<dbReference type="PRO" id="PR:Q9ZWI7"/>
<dbReference type="Proteomes" id="UP000006548">
    <property type="component" value="Chromosome 2"/>
</dbReference>
<dbReference type="ExpressionAtlas" id="Q9ZWI7">
    <property type="expression patterns" value="baseline and differential"/>
</dbReference>
<dbReference type="GO" id="GO:0005737">
    <property type="term" value="C:cytoplasm"/>
    <property type="evidence" value="ECO:0007669"/>
    <property type="project" value="UniProtKB-ARBA"/>
</dbReference>
<dbReference type="GO" id="GO:0043231">
    <property type="term" value="C:intracellular membrane-bounded organelle"/>
    <property type="evidence" value="ECO:0007669"/>
    <property type="project" value="UniProtKB-ARBA"/>
</dbReference>
<dbReference type="GO" id="GO:0016020">
    <property type="term" value="C:membrane"/>
    <property type="evidence" value="ECO:0007669"/>
    <property type="project" value="UniProtKB-SubCell"/>
</dbReference>
<dbReference type="GO" id="GO:0006890">
    <property type="term" value="P:retrograde vesicle-mediated transport, Golgi to endoplasmic reticulum"/>
    <property type="evidence" value="ECO:0000303"/>
    <property type="project" value="UniProtKB"/>
</dbReference>
<dbReference type="InterPro" id="IPR004932">
    <property type="entry name" value="Rer1"/>
</dbReference>
<dbReference type="PANTHER" id="PTHR10743">
    <property type="entry name" value="PROTEIN RER1"/>
    <property type="match status" value="1"/>
</dbReference>
<dbReference type="PANTHER" id="PTHR10743:SF28">
    <property type="entry name" value="PROTEIN RER1C"/>
    <property type="match status" value="1"/>
</dbReference>
<dbReference type="Pfam" id="PF03248">
    <property type="entry name" value="Rer1"/>
    <property type="match status" value="1"/>
</dbReference>
<dbReference type="PIRSF" id="PIRSF016013">
    <property type="entry name" value="AtER_Rer1p"/>
    <property type="match status" value="1"/>
</dbReference>
<organism>
    <name type="scientific">Arabidopsis thaliana</name>
    <name type="common">Mouse-ear cress</name>
    <dbReference type="NCBI Taxonomy" id="3702"/>
    <lineage>
        <taxon>Eukaryota</taxon>
        <taxon>Viridiplantae</taxon>
        <taxon>Streptophyta</taxon>
        <taxon>Embryophyta</taxon>
        <taxon>Tracheophyta</taxon>
        <taxon>Spermatophyta</taxon>
        <taxon>Magnoliopsida</taxon>
        <taxon>eudicotyledons</taxon>
        <taxon>Gunneridae</taxon>
        <taxon>Pentapetalae</taxon>
        <taxon>rosids</taxon>
        <taxon>malvids</taxon>
        <taxon>Brassicales</taxon>
        <taxon>Brassicaceae</taxon>
        <taxon>Camelineae</taxon>
        <taxon>Arabidopsis</taxon>
    </lineage>
</organism>